<comment type="function">
    <text evidence="1">Catalyzes the folate-dependent formation of 5-methyl-uridine at position 54 (M-5-U54) in all tRNAs.</text>
</comment>
<comment type="catalytic activity">
    <reaction evidence="1">
        <text>uridine(54) in tRNA + (6R)-5,10-methylene-5,6,7,8-tetrahydrofolate + NADH + H(+) = 5-methyluridine(54) in tRNA + (6S)-5,6,7,8-tetrahydrofolate + NAD(+)</text>
        <dbReference type="Rhea" id="RHEA:16873"/>
        <dbReference type="Rhea" id="RHEA-COMP:10167"/>
        <dbReference type="Rhea" id="RHEA-COMP:10193"/>
        <dbReference type="ChEBI" id="CHEBI:15378"/>
        <dbReference type="ChEBI" id="CHEBI:15636"/>
        <dbReference type="ChEBI" id="CHEBI:57453"/>
        <dbReference type="ChEBI" id="CHEBI:57540"/>
        <dbReference type="ChEBI" id="CHEBI:57945"/>
        <dbReference type="ChEBI" id="CHEBI:65315"/>
        <dbReference type="ChEBI" id="CHEBI:74447"/>
        <dbReference type="EC" id="2.1.1.74"/>
    </reaction>
</comment>
<comment type="catalytic activity">
    <reaction evidence="1">
        <text>uridine(54) in tRNA + (6R)-5,10-methylene-5,6,7,8-tetrahydrofolate + NADPH + H(+) = 5-methyluridine(54) in tRNA + (6S)-5,6,7,8-tetrahydrofolate + NADP(+)</text>
        <dbReference type="Rhea" id="RHEA:62372"/>
        <dbReference type="Rhea" id="RHEA-COMP:10167"/>
        <dbReference type="Rhea" id="RHEA-COMP:10193"/>
        <dbReference type="ChEBI" id="CHEBI:15378"/>
        <dbReference type="ChEBI" id="CHEBI:15636"/>
        <dbReference type="ChEBI" id="CHEBI:57453"/>
        <dbReference type="ChEBI" id="CHEBI:57783"/>
        <dbReference type="ChEBI" id="CHEBI:58349"/>
        <dbReference type="ChEBI" id="CHEBI:65315"/>
        <dbReference type="ChEBI" id="CHEBI:74447"/>
        <dbReference type="EC" id="2.1.1.74"/>
    </reaction>
</comment>
<comment type="cofactor">
    <cofactor evidence="1">
        <name>FAD</name>
        <dbReference type="ChEBI" id="CHEBI:57692"/>
    </cofactor>
</comment>
<comment type="subcellular location">
    <subcellularLocation>
        <location evidence="1">Cytoplasm</location>
    </subcellularLocation>
</comment>
<comment type="similarity">
    <text evidence="1">Belongs to the MnmG family. TrmFO subfamily.</text>
</comment>
<dbReference type="EC" id="2.1.1.74" evidence="1"/>
<dbReference type="EMBL" id="AE017223">
    <property type="protein sequence ID" value="AAX74271.1"/>
    <property type="molecule type" value="Genomic_DNA"/>
</dbReference>
<dbReference type="RefSeq" id="WP_002964025.1">
    <property type="nucleotide sequence ID" value="NC_006932.1"/>
</dbReference>
<dbReference type="SMR" id="Q57DL3"/>
<dbReference type="EnsemblBacteria" id="AAX74271">
    <property type="protein sequence ID" value="AAX74271"/>
    <property type="gene ID" value="BruAb1_0906"/>
</dbReference>
<dbReference type="GeneID" id="93016728"/>
<dbReference type="KEGG" id="bmb:BruAb1_0906"/>
<dbReference type="HOGENOM" id="CLU_033057_1_0_5"/>
<dbReference type="Proteomes" id="UP000000540">
    <property type="component" value="Chromosome I"/>
</dbReference>
<dbReference type="GO" id="GO:0005829">
    <property type="term" value="C:cytosol"/>
    <property type="evidence" value="ECO:0007669"/>
    <property type="project" value="TreeGrafter"/>
</dbReference>
<dbReference type="GO" id="GO:0050660">
    <property type="term" value="F:flavin adenine dinucleotide binding"/>
    <property type="evidence" value="ECO:0007669"/>
    <property type="project" value="UniProtKB-UniRule"/>
</dbReference>
<dbReference type="GO" id="GO:0047151">
    <property type="term" value="F:tRNA (uracil(54)-C5)-methyltransferase activity, 5,10-methylenetetrahydrofolate-dependent"/>
    <property type="evidence" value="ECO:0007669"/>
    <property type="project" value="UniProtKB-UniRule"/>
</dbReference>
<dbReference type="GO" id="GO:0030488">
    <property type="term" value="P:tRNA methylation"/>
    <property type="evidence" value="ECO:0007669"/>
    <property type="project" value="TreeGrafter"/>
</dbReference>
<dbReference type="GO" id="GO:0002098">
    <property type="term" value="P:tRNA wobble uridine modification"/>
    <property type="evidence" value="ECO:0007669"/>
    <property type="project" value="TreeGrafter"/>
</dbReference>
<dbReference type="Gene3D" id="3.50.50.60">
    <property type="entry name" value="FAD/NAD(P)-binding domain"/>
    <property type="match status" value="2"/>
</dbReference>
<dbReference type="HAMAP" id="MF_01037">
    <property type="entry name" value="TrmFO"/>
    <property type="match status" value="1"/>
</dbReference>
<dbReference type="InterPro" id="IPR036188">
    <property type="entry name" value="FAD/NAD-bd_sf"/>
</dbReference>
<dbReference type="InterPro" id="IPR002218">
    <property type="entry name" value="MnmG-rel"/>
</dbReference>
<dbReference type="InterPro" id="IPR020595">
    <property type="entry name" value="MnmG-rel_CS"/>
</dbReference>
<dbReference type="InterPro" id="IPR040131">
    <property type="entry name" value="MnmG_N"/>
</dbReference>
<dbReference type="InterPro" id="IPR004417">
    <property type="entry name" value="TrmFO"/>
</dbReference>
<dbReference type="NCBIfam" id="TIGR00137">
    <property type="entry name" value="gid_trmFO"/>
    <property type="match status" value="1"/>
</dbReference>
<dbReference type="NCBIfam" id="NF003739">
    <property type="entry name" value="PRK05335.1"/>
    <property type="match status" value="1"/>
</dbReference>
<dbReference type="PANTHER" id="PTHR11806">
    <property type="entry name" value="GLUCOSE INHIBITED DIVISION PROTEIN A"/>
    <property type="match status" value="1"/>
</dbReference>
<dbReference type="PANTHER" id="PTHR11806:SF2">
    <property type="entry name" value="METHYLENETETRAHYDROFOLATE--TRNA-(URACIL-5-)-METHYLTRANSFERASE TRMFO"/>
    <property type="match status" value="1"/>
</dbReference>
<dbReference type="Pfam" id="PF01134">
    <property type="entry name" value="GIDA"/>
    <property type="match status" value="1"/>
</dbReference>
<dbReference type="SUPFAM" id="SSF51905">
    <property type="entry name" value="FAD/NAD(P)-binding domain"/>
    <property type="match status" value="1"/>
</dbReference>
<dbReference type="PROSITE" id="PS01281">
    <property type="entry name" value="GIDA_2"/>
    <property type="match status" value="1"/>
</dbReference>
<feature type="chain" id="PRO_0000117238" description="Methylenetetrahydrofolate--tRNA-(uracil-5-)-methyltransferase TrmFO">
    <location>
        <begin position="1"/>
        <end position="466"/>
    </location>
</feature>
<feature type="binding site" evidence="1">
    <location>
        <begin position="14"/>
        <end position="19"/>
    </location>
    <ligand>
        <name>FAD</name>
        <dbReference type="ChEBI" id="CHEBI:57692"/>
    </ligand>
</feature>
<protein>
    <recommendedName>
        <fullName evidence="1">Methylenetetrahydrofolate--tRNA-(uracil-5-)-methyltransferase TrmFO</fullName>
        <ecNumber evidence="1">2.1.1.74</ecNumber>
    </recommendedName>
    <alternativeName>
        <fullName evidence="1">Folate-dependent tRNA (uracil-5-)-methyltransferase</fullName>
    </alternativeName>
    <alternativeName>
        <fullName evidence="1">Folate-dependent tRNA(M-5-U54)-methyltransferase</fullName>
    </alternativeName>
</protein>
<sequence length="466" mass="50174">MSNNTDLSPVHVIGGGLAGSEAAWQIAQAGVPVVLHEMRPVRGTDAHKTEQLAELVCSNSFRSDDAETNAVGVLHAEMRLAGSLIMACADAHQVPAGGALAVDREGFSQAVTARLEAHPLITIEREEITGLPPTEWGTTIIATGPLTAPSLAEAIAAETDADALAFFDAIAPIIHFDSINMDVCWFQSRYDKVGPGGTGKDYINCPMDKEQYEAFVAALIEGDKTDFKEWEGTPYFDGCLPIEVMAERGPETLRHGPMKPMGLTNAHNPTVKPYAVVQLRQDNALGTLYNMVGFQTKLKYGSQTGIFKMIPGLENAEFARLGGLHRNTYLNSPVLLDNVLRLKSRQTLRFAGQVTGCEGYVESSAIGLLAGRFTAAEKLSQAAVPPPPTTAFGALLGHITGGHIVTNDEPGKRSFQPMNVNFGLFPPVDVPKPEGKRLRGKEKTIAKKRALSARALADCRNWLSLY</sequence>
<name>TRMFO_BRUAB</name>
<organism>
    <name type="scientific">Brucella abortus biovar 1 (strain 9-941)</name>
    <dbReference type="NCBI Taxonomy" id="262698"/>
    <lineage>
        <taxon>Bacteria</taxon>
        <taxon>Pseudomonadati</taxon>
        <taxon>Pseudomonadota</taxon>
        <taxon>Alphaproteobacteria</taxon>
        <taxon>Hyphomicrobiales</taxon>
        <taxon>Brucellaceae</taxon>
        <taxon>Brucella/Ochrobactrum group</taxon>
        <taxon>Brucella</taxon>
    </lineage>
</organism>
<evidence type="ECO:0000255" key="1">
    <source>
        <dbReference type="HAMAP-Rule" id="MF_01037"/>
    </source>
</evidence>
<keyword id="KW-0963">Cytoplasm</keyword>
<keyword id="KW-0274">FAD</keyword>
<keyword id="KW-0285">Flavoprotein</keyword>
<keyword id="KW-0489">Methyltransferase</keyword>
<keyword id="KW-0520">NAD</keyword>
<keyword id="KW-0521">NADP</keyword>
<keyword id="KW-0808">Transferase</keyword>
<keyword id="KW-0819">tRNA processing</keyword>
<gene>
    <name evidence="1" type="primary">trmFO</name>
    <name type="synonym">gid</name>
    <name type="ordered locus">BruAb1_0906</name>
</gene>
<reference key="1">
    <citation type="journal article" date="2005" name="J. Bacteriol.">
        <title>Completion of the genome sequence of Brucella abortus and comparison to the highly similar genomes of Brucella melitensis and Brucella suis.</title>
        <authorList>
            <person name="Halling S.M."/>
            <person name="Peterson-Burch B.D."/>
            <person name="Bricker B.J."/>
            <person name="Zuerner R.L."/>
            <person name="Qing Z."/>
            <person name="Li L.-L."/>
            <person name="Kapur V."/>
            <person name="Alt D.P."/>
            <person name="Olsen S.C."/>
        </authorList>
    </citation>
    <scope>NUCLEOTIDE SEQUENCE [LARGE SCALE GENOMIC DNA]</scope>
    <source>
        <strain>9-941</strain>
    </source>
</reference>
<proteinExistence type="inferred from homology"/>
<accession>Q57DL3</accession>